<keyword id="KW-0002">3D-structure</keyword>
<keyword id="KW-0007">Acetylation</keyword>
<keyword id="KW-0067">ATP-binding</keyword>
<keyword id="KW-0963">Cytoplasm</keyword>
<keyword id="KW-0206">Cytoskeleton</keyword>
<keyword id="KW-0903">Direct protein sequencing</keyword>
<keyword id="KW-0378">Hydrolase</keyword>
<keyword id="KW-0488">Methylation</keyword>
<keyword id="KW-0547">Nucleotide-binding</keyword>
<keyword id="KW-0539">Nucleus</keyword>
<keyword id="KW-0558">Oxidation</keyword>
<keyword id="KW-1185">Reference proteome</keyword>
<gene>
    <name type="primary">ACTB</name>
</gene>
<organism>
    <name type="scientific">Gallus gallus</name>
    <name type="common">Chicken</name>
    <dbReference type="NCBI Taxonomy" id="9031"/>
    <lineage>
        <taxon>Eukaryota</taxon>
        <taxon>Metazoa</taxon>
        <taxon>Chordata</taxon>
        <taxon>Craniata</taxon>
        <taxon>Vertebrata</taxon>
        <taxon>Euteleostomi</taxon>
        <taxon>Archelosauria</taxon>
        <taxon>Archosauria</taxon>
        <taxon>Dinosauria</taxon>
        <taxon>Saurischia</taxon>
        <taxon>Theropoda</taxon>
        <taxon>Coelurosauria</taxon>
        <taxon>Aves</taxon>
        <taxon>Neognathae</taxon>
        <taxon>Galloanserae</taxon>
        <taxon>Galliformes</taxon>
        <taxon>Phasianidae</taxon>
        <taxon>Phasianinae</taxon>
        <taxon>Gallus</taxon>
    </lineage>
</organism>
<name>ACTB_CHICK</name>
<accession>P60706</accession>
<accession>P02570</accession>
<accession>P70514</accession>
<accession>P99021</accession>
<accession>Q11211</accession>
<accession>Q64316</accession>
<evidence type="ECO:0000250" key="1"/>
<evidence type="ECO:0000250" key="2">
    <source>
        <dbReference type="UniProtKB" id="O93400"/>
    </source>
</evidence>
<evidence type="ECO:0000250" key="3">
    <source>
        <dbReference type="UniProtKB" id="P60709"/>
    </source>
</evidence>
<evidence type="ECO:0000250" key="4">
    <source>
        <dbReference type="UniProtKB" id="P60710"/>
    </source>
</evidence>
<evidence type="ECO:0000250" key="5">
    <source>
        <dbReference type="UniProtKB" id="P68137"/>
    </source>
</evidence>
<evidence type="ECO:0000269" key="6">
    <source>
    </source>
</evidence>
<evidence type="ECO:0000269" key="7">
    <source>
    </source>
</evidence>
<evidence type="ECO:0000269" key="8">
    <source ref="3"/>
</evidence>
<evidence type="ECO:0000305" key="9"/>
<dbReference type="EC" id="3.6.4.-" evidence="5"/>
<dbReference type="EMBL" id="X00182">
    <property type="protein sequence ID" value="CAA25004.1"/>
    <property type="molecule type" value="Genomic_DNA"/>
</dbReference>
<dbReference type="EMBL" id="L08165">
    <property type="protein sequence ID" value="AAA48615.1"/>
    <property type="molecule type" value="mRNA"/>
</dbReference>
<dbReference type="PIR" id="A20888">
    <property type="entry name" value="ATCHB"/>
</dbReference>
<dbReference type="RefSeq" id="NP_990849.1">
    <property type="nucleotide sequence ID" value="NM_205518.2"/>
</dbReference>
<dbReference type="PDB" id="3J0S">
    <property type="method" value="EM"/>
    <property type="resolution" value="9.00 A"/>
    <property type="chains" value="A/B/C/D/E/F/G/H/I/J/K/L=2-375"/>
</dbReference>
<dbReference type="PDBsum" id="3J0S"/>
<dbReference type="EMDB" id="EMD-5354"/>
<dbReference type="SASBDB" id="P60706"/>
<dbReference type="SMR" id="P60706"/>
<dbReference type="BioGRID" id="676771">
    <property type="interactions" value="5"/>
</dbReference>
<dbReference type="DIP" id="DIP-41284N"/>
<dbReference type="FunCoup" id="P60706">
    <property type="interactions" value="2342"/>
</dbReference>
<dbReference type="IntAct" id="P60706">
    <property type="interactions" value="1"/>
</dbReference>
<dbReference type="MINT" id="P60706"/>
<dbReference type="STRING" id="9031.ENSGALP00000060844"/>
<dbReference type="PaxDb" id="9031-ENSGALP00000015657"/>
<dbReference type="GeneID" id="396526"/>
<dbReference type="KEGG" id="gga:396526"/>
<dbReference type="CTD" id="60"/>
<dbReference type="VEuPathDB" id="HostDB:geneid_396526"/>
<dbReference type="eggNOG" id="KOG0676">
    <property type="taxonomic scope" value="Eukaryota"/>
</dbReference>
<dbReference type="HOGENOM" id="CLU_027965_0_2_1"/>
<dbReference type="InParanoid" id="P60706"/>
<dbReference type="OMA" id="FHTTAER"/>
<dbReference type="OrthoDB" id="9240758at2759"/>
<dbReference type="Reactome" id="R-GGA-190873">
    <property type="pathway name" value="Gap junction degradation"/>
</dbReference>
<dbReference type="Reactome" id="R-GGA-196025">
    <property type="pathway name" value="Formation of annular gap junctions"/>
</dbReference>
<dbReference type="Reactome" id="R-GGA-2029482">
    <property type="pathway name" value="Regulation of actin dynamics for phagocytic cup formation"/>
</dbReference>
<dbReference type="Reactome" id="R-GGA-3928662">
    <property type="pathway name" value="EPHB-mediated forward signaling"/>
</dbReference>
<dbReference type="Reactome" id="R-GGA-3928665">
    <property type="pathway name" value="EPH-ephrin mediated repulsion of cells"/>
</dbReference>
<dbReference type="Reactome" id="R-GGA-418990">
    <property type="pathway name" value="Adherens junctions interactions"/>
</dbReference>
<dbReference type="Reactome" id="R-GGA-4420097">
    <property type="pathway name" value="VEGFA-VEGFR2 Pathway"/>
</dbReference>
<dbReference type="Reactome" id="R-GGA-5250924">
    <property type="pathway name" value="B-WICH complex positively regulates rRNA expression"/>
</dbReference>
<dbReference type="Reactome" id="R-GGA-5626467">
    <property type="pathway name" value="RHO GTPases activate IQGAPs"/>
</dbReference>
<dbReference type="Reactome" id="R-GGA-5663213">
    <property type="pathway name" value="RHO GTPases Activate WASPs and WAVEs"/>
</dbReference>
<dbReference type="Reactome" id="R-GGA-5663220">
    <property type="pathway name" value="RHO GTPases Activate Formins"/>
</dbReference>
<dbReference type="Reactome" id="R-GGA-5674135">
    <property type="pathway name" value="MAP2K and MAPK activation"/>
</dbReference>
<dbReference type="Reactome" id="R-GGA-5689603">
    <property type="pathway name" value="UCH proteinases"/>
</dbReference>
<dbReference type="Reactome" id="R-GGA-5696394">
    <property type="pathway name" value="DNA Damage Recognition in GG-NER"/>
</dbReference>
<dbReference type="Reactome" id="R-GGA-8856828">
    <property type="pathway name" value="Clathrin-mediated endocytosis"/>
</dbReference>
<dbReference type="Reactome" id="R-GGA-9035034">
    <property type="pathway name" value="RHOF GTPase cycle"/>
</dbReference>
<dbReference type="EvolutionaryTrace" id="P60706"/>
<dbReference type="PRO" id="PR:P60706"/>
<dbReference type="Proteomes" id="UP000000539">
    <property type="component" value="Chromosome 14"/>
</dbReference>
<dbReference type="Bgee" id="ENSGALG00000009621">
    <property type="expression patterns" value="Expressed in colon and 12 other cell types or tissues"/>
</dbReference>
<dbReference type="GO" id="GO:0015629">
    <property type="term" value="C:actin cytoskeleton"/>
    <property type="evidence" value="ECO:0000250"/>
    <property type="project" value="UniProtKB"/>
</dbReference>
<dbReference type="GO" id="GO:0005884">
    <property type="term" value="C:actin filament"/>
    <property type="evidence" value="ECO:0000318"/>
    <property type="project" value="GO_Central"/>
</dbReference>
<dbReference type="GO" id="GO:0030424">
    <property type="term" value="C:axon"/>
    <property type="evidence" value="ECO:0000318"/>
    <property type="project" value="GO_Central"/>
</dbReference>
<dbReference type="GO" id="GO:0005737">
    <property type="term" value="C:cytoplasm"/>
    <property type="evidence" value="ECO:0000314"/>
    <property type="project" value="AgBase"/>
</dbReference>
<dbReference type="GO" id="GO:0005856">
    <property type="term" value="C:cytoskeleton"/>
    <property type="evidence" value="ECO:0000314"/>
    <property type="project" value="AgBase"/>
</dbReference>
<dbReference type="GO" id="GO:0097433">
    <property type="term" value="C:dense body"/>
    <property type="evidence" value="ECO:0000314"/>
    <property type="project" value="AgBase"/>
</dbReference>
<dbReference type="GO" id="GO:0005925">
    <property type="term" value="C:focal adhesion"/>
    <property type="evidence" value="ECO:0000314"/>
    <property type="project" value="AgBase"/>
</dbReference>
<dbReference type="GO" id="GO:0030027">
    <property type="term" value="C:lamellipodium"/>
    <property type="evidence" value="ECO:0000314"/>
    <property type="project" value="AgBase"/>
</dbReference>
<dbReference type="GO" id="GO:0016020">
    <property type="term" value="C:membrane"/>
    <property type="evidence" value="ECO:0000318"/>
    <property type="project" value="GO_Central"/>
</dbReference>
<dbReference type="GO" id="GO:0035267">
    <property type="term" value="C:NuA4 histone acetyltransferase complex"/>
    <property type="evidence" value="ECO:0000318"/>
    <property type="project" value="GO_Central"/>
</dbReference>
<dbReference type="GO" id="GO:0005634">
    <property type="term" value="C:nucleus"/>
    <property type="evidence" value="ECO:0000250"/>
    <property type="project" value="UniProtKB"/>
</dbReference>
<dbReference type="GO" id="GO:0005886">
    <property type="term" value="C:plasma membrane"/>
    <property type="evidence" value="ECO:0000314"/>
    <property type="project" value="AgBase"/>
</dbReference>
<dbReference type="GO" id="GO:0045202">
    <property type="term" value="C:synapse"/>
    <property type="evidence" value="ECO:0000318"/>
    <property type="project" value="GO_Central"/>
</dbReference>
<dbReference type="GO" id="GO:0005524">
    <property type="term" value="F:ATP binding"/>
    <property type="evidence" value="ECO:0007669"/>
    <property type="project" value="UniProtKB-KW"/>
</dbReference>
<dbReference type="GO" id="GO:0016787">
    <property type="term" value="F:hydrolase activity"/>
    <property type="evidence" value="ECO:0007669"/>
    <property type="project" value="UniProtKB-KW"/>
</dbReference>
<dbReference type="GO" id="GO:0019901">
    <property type="term" value="F:protein kinase binding"/>
    <property type="evidence" value="ECO:0000318"/>
    <property type="project" value="GO_Central"/>
</dbReference>
<dbReference type="GO" id="GO:0098973">
    <property type="term" value="F:structural constituent of postsynaptic actin cytoskeleton"/>
    <property type="evidence" value="ECO:0000318"/>
    <property type="project" value="GO_Central"/>
</dbReference>
<dbReference type="GO" id="GO:0007409">
    <property type="term" value="P:axonogenesis"/>
    <property type="evidence" value="ECO:0000318"/>
    <property type="project" value="GO_Central"/>
</dbReference>
<dbReference type="GO" id="GO:0048870">
    <property type="term" value="P:cell motility"/>
    <property type="evidence" value="ECO:0000318"/>
    <property type="project" value="GO_Central"/>
</dbReference>
<dbReference type="CDD" id="cd10224">
    <property type="entry name" value="ASKHA_NBD_actin"/>
    <property type="match status" value="1"/>
</dbReference>
<dbReference type="FunFam" id="3.30.420.40:FF:000131">
    <property type="entry name" value="Actin, alpha skeletal muscle"/>
    <property type="match status" value="1"/>
</dbReference>
<dbReference type="FunFam" id="3.30.420.40:FF:000291">
    <property type="entry name" value="Actin, alpha skeletal muscle"/>
    <property type="match status" value="1"/>
</dbReference>
<dbReference type="FunFam" id="3.90.640.10:FF:000047">
    <property type="entry name" value="Actin, alpha skeletal muscle"/>
    <property type="match status" value="1"/>
</dbReference>
<dbReference type="FunFam" id="3.30.420.40:FF:000058">
    <property type="entry name" value="Putative actin-related protein 5"/>
    <property type="match status" value="1"/>
</dbReference>
<dbReference type="Gene3D" id="3.30.420.40">
    <property type="match status" value="2"/>
</dbReference>
<dbReference type="Gene3D" id="3.90.640.10">
    <property type="entry name" value="Actin, Chain A, domain 4"/>
    <property type="match status" value="1"/>
</dbReference>
<dbReference type="InterPro" id="IPR004000">
    <property type="entry name" value="Actin"/>
</dbReference>
<dbReference type="InterPro" id="IPR020902">
    <property type="entry name" value="Actin/actin-like_CS"/>
</dbReference>
<dbReference type="InterPro" id="IPR004001">
    <property type="entry name" value="Actin_CS"/>
</dbReference>
<dbReference type="InterPro" id="IPR043129">
    <property type="entry name" value="ATPase_NBD"/>
</dbReference>
<dbReference type="PANTHER" id="PTHR11937">
    <property type="entry name" value="ACTIN"/>
    <property type="match status" value="1"/>
</dbReference>
<dbReference type="Pfam" id="PF00022">
    <property type="entry name" value="Actin"/>
    <property type="match status" value="1"/>
</dbReference>
<dbReference type="PRINTS" id="PR00190">
    <property type="entry name" value="ACTIN"/>
</dbReference>
<dbReference type="SMART" id="SM00268">
    <property type="entry name" value="ACTIN"/>
    <property type="match status" value="1"/>
</dbReference>
<dbReference type="SUPFAM" id="SSF53067">
    <property type="entry name" value="Actin-like ATPase domain"/>
    <property type="match status" value="2"/>
</dbReference>
<dbReference type="PROSITE" id="PS00406">
    <property type="entry name" value="ACTINS_1"/>
    <property type="match status" value="1"/>
</dbReference>
<dbReference type="PROSITE" id="PS00432">
    <property type="entry name" value="ACTINS_2"/>
    <property type="match status" value="1"/>
</dbReference>
<dbReference type="PROSITE" id="PS01132">
    <property type="entry name" value="ACTINS_ACT_LIKE"/>
    <property type="match status" value="1"/>
</dbReference>
<comment type="function">
    <text evidence="3">Actin is a highly conserved protein that polymerizes to produce filaments that form cross-linked networks in the cytoplasm of cells. Actin exists in both monomeric (G-actin) and polymeric (F-actin) forms, both forms playing key functions, such as cell motility and contraction. In addition to their role in the cytoplasmic cytoskeleton, G- and F-actin also localize in the nucleus, and regulate gene transcription and motility and repair of damaged DNA.</text>
</comment>
<comment type="catalytic activity">
    <reaction evidence="5">
        <text>ATP + H2O = ADP + phosphate + H(+)</text>
        <dbReference type="Rhea" id="RHEA:13065"/>
        <dbReference type="ChEBI" id="CHEBI:15377"/>
        <dbReference type="ChEBI" id="CHEBI:15378"/>
        <dbReference type="ChEBI" id="CHEBI:30616"/>
        <dbReference type="ChEBI" id="CHEBI:43474"/>
        <dbReference type="ChEBI" id="CHEBI:456216"/>
    </reaction>
</comment>
<comment type="subunit">
    <text evidence="3 4">Polymerization of globular actin (G-actin) leads to a structural filament (F-actin) in the form of a two-stranded helix (By similarity). Each actin can bind to 4 others (By similarity).</text>
</comment>
<comment type="subcellular location">
    <subcellularLocation>
        <location evidence="4">Cytoplasm</location>
        <location evidence="4">Cytoskeleton</location>
    </subcellularLocation>
    <subcellularLocation>
        <location evidence="2">Nucleus</location>
    </subcellularLocation>
</comment>
<comment type="PTM">
    <molecule>Actin, cytoplasmic 1</molecule>
    <text evidence="3">N-terminal cleavage of acetylated methionine of immature cytoplasmic actin by ACTMAP.</text>
</comment>
<comment type="PTM">
    <text evidence="4">Oxidation of Met-44 and Met-47 by MICALs (MICAL1, MICAL2 or MICAL3) to form methionine sulfoxide promotes actin filament depolymerization. MICAL1 and MICAL2 produce the (R)-S-oxide form. The (R)-S-oxide form is reverted by MSRB1 and MSRB2, which promote actin repolymerization (By similarity).</text>
</comment>
<comment type="PTM">
    <text evidence="6 7">Methylation at His-73 by SETD3 (PubMed:30626964). Methylation stabilizes actin filaments (PubMed:11955010).</text>
</comment>
<comment type="miscellaneous">
    <text evidence="2">In vertebrates 3 main groups of actin isoforms, alpha, beta and gamma have been identified. The alpha actins are found in muscle tissues and are a major constituent of the contractile apparatus. The beta and gamma actins coexist in most cell types as components of the cytoskeleton and as mediators of internal cell motility.</text>
</comment>
<comment type="similarity">
    <text evidence="9">Belongs to the actin family.</text>
</comment>
<sequence length="375" mass="41737">MDDDIAALVVDNGSGMCKAGFAGDDAPRAVFPSIVGRPRHQGVMVGMGQKDSYVGDEAQSKRGILTLKYPIEHGIVTNWDDMEKIWHHTFYNELRVAPEEHPVLLTEAPLNPKANREKMTQIMFETFNTPAMYVAIQAVLSLYASGRTTGIVMDSGDGVTHTVPIYEGYALPHAILRLDLAGRDLTDYLMKILTERGYSFTTTAEREIVRDIKEKLCYVALDFEQEMATAASSSSLEKSYELPDGQVITIGNERFRCPEALFQPSFLGMESCGIHETTFNSIMKCDVDIRKDLYANTVLSGGTTMYPGIADRMQKEITALAPSTMKIKIIAPPERKYSVWIGGSILASLSTFQQMWISKQEYDESGPSIVHRKCF</sequence>
<proteinExistence type="evidence at protein level"/>
<protein>
    <recommendedName>
        <fullName>Actin, cytoplasmic 1</fullName>
        <ecNumber evidence="5">3.6.4.-</ecNumber>
    </recommendedName>
    <alternativeName>
        <fullName>Beta-actin</fullName>
    </alternativeName>
    <component>
        <recommendedName>
            <fullName>Actin, cytoplasmic 1, N-terminally processed</fullName>
        </recommendedName>
    </component>
</protein>
<feature type="chain" id="PRO_0000367086" description="Actin, cytoplasmic 1">
    <location>
        <begin position="1"/>
        <end position="375"/>
    </location>
</feature>
<feature type="initiator methionine" description="Removed; alternate" evidence="8">
    <location>
        <position position="1"/>
    </location>
</feature>
<feature type="chain" id="PRO_0000000789" description="Actin, cytoplasmic 1, N-terminally processed">
    <location>
        <begin position="2"/>
        <end position="375"/>
    </location>
</feature>
<feature type="modified residue" description="N-acetylmethionine; in Actin, cytoplasmic 1; alternate" evidence="1">
    <location>
        <position position="1"/>
    </location>
</feature>
<feature type="modified residue" description="N-acetylaspartate; in Actin, cytoplasmic 1, N-terminally processed" evidence="8">
    <location>
        <position position="2"/>
    </location>
</feature>
<feature type="modified residue" description="Methionine (R)-sulfoxide" evidence="4">
    <location>
        <position position="44"/>
    </location>
</feature>
<feature type="modified residue" description="Methionine (R)-sulfoxide" evidence="4">
    <location>
        <position position="47"/>
    </location>
</feature>
<feature type="modified residue" description="Tele-methylhistidine" evidence="6 7">
    <location>
        <position position="73"/>
    </location>
</feature>
<feature type="mutagenesis site" description="ATP is exchanged at an increased rate; decreased the thermal stability of actin monomers." evidence="6">
    <original>H</original>
    <variation>A</variation>
    <location>
        <position position="73"/>
    </location>
</feature>
<feature type="sequence conflict" description="In Ref. 1; CAA25004." evidence="9" ref="1">
    <original>K</original>
    <variation>R</variation>
    <location>
        <position position="336"/>
    </location>
</feature>
<reference key="1">
    <citation type="journal article" date="1983" name="Nucleic Acids Res.">
        <title>The nucleotide sequence of the chick cytoplasmic beta-actin gene.</title>
        <authorList>
            <person name="Kost T.A."/>
            <person name="Theodorakis N."/>
            <person name="Hughes S.H."/>
        </authorList>
    </citation>
    <scope>NUCLEOTIDE SEQUENCE [GENOMIC DNA]</scope>
</reference>
<reference key="2">
    <citation type="submission" date="1993-01" db="EMBL/GenBank/DDBJ databases">
        <title>Nucleotide sequence of a beta-actin cDNA from mitochondrial DNA-depleted chicken cells.</title>
        <authorList>
            <person name="Wang H."/>
            <person name="Morais R."/>
        </authorList>
    </citation>
    <scope>NUCLEOTIDE SEQUENCE [MRNA]</scope>
</reference>
<reference key="3">
    <citation type="submission" date="2007-01" db="UniProtKB">
        <authorList>
            <person name="Bienvenut W.V."/>
            <person name="Black E.J."/>
            <person name="Gillespie D.A."/>
        </authorList>
    </citation>
    <scope>PROTEIN SEQUENCE OF 2-37; 85-113; 178-191; 197-206; 239-254; 291-326 AND 360-372</scope>
    <scope>CLEAVAGE OF INITIATOR METHIONINE</scope>
    <scope>ACETYLATION AT ASP-2</scope>
    <scope>IDENTIFICATION BY MASS SPECTROMETRY</scope>
    <source>
        <tissue>B-cell lymphoma</tissue>
    </source>
</reference>
<reference key="4">
    <citation type="journal article" date="2002" name="J. Mol. Biol.">
        <title>The role of MeH73 in actin polymerization and ATP hydrolysis.</title>
        <authorList>
            <person name="Nyman T."/>
            <person name="Schueler H."/>
            <person name="Korenbaum E."/>
            <person name="Schutt C.E."/>
            <person name="Karlsson R."/>
            <person name="Lindberg U."/>
        </authorList>
    </citation>
    <scope>METHYLATION AT HIS-73</scope>
    <scope>MUTAGENESIS OF HIS-73</scope>
</reference>
<reference key="5">
    <citation type="journal article" date="2019" name="Nature">
        <title>SETD3 is an actin histidine methyltransferase that prevents primary dystocia.</title>
        <authorList>
            <person name="Wilkinson A.W."/>
            <person name="Diep J."/>
            <person name="Dai S."/>
            <person name="Liu S."/>
            <person name="Ooi Y.S."/>
            <person name="Song D."/>
            <person name="Li T.M."/>
            <person name="Horton J.R."/>
            <person name="Zhang X."/>
            <person name="Liu C."/>
            <person name="Trivedi D.V."/>
            <person name="Ruppel K.M."/>
            <person name="Vilches-Moure J.G."/>
            <person name="Casey K.M."/>
            <person name="Mak J."/>
            <person name="Cowan T."/>
            <person name="Elias J.E."/>
            <person name="Nagamine C.M."/>
            <person name="Spudich J.A."/>
            <person name="Cheng X."/>
            <person name="Carette J.E."/>
            <person name="Gozani O."/>
        </authorList>
    </citation>
    <scope>METHYLATION AT HIS-73</scope>
</reference>